<accession>Q68J47</accession>
<feature type="chain" id="PRO_0000197684" description="Rhodopsin">
    <location>
        <begin position="1"/>
        <end position="348"/>
    </location>
</feature>
<feature type="topological domain" description="Extracellular" evidence="7">
    <location>
        <begin position="1"/>
        <end position="36"/>
    </location>
</feature>
<feature type="transmembrane region" description="Helical; Name=1" evidence="1">
    <location>
        <begin position="37"/>
        <end position="61"/>
    </location>
</feature>
<feature type="topological domain" description="Cytoplasmic" evidence="7">
    <location>
        <begin position="62"/>
        <end position="73"/>
    </location>
</feature>
<feature type="transmembrane region" description="Helical; Name=2" evidence="1">
    <location>
        <begin position="74"/>
        <end position="96"/>
    </location>
</feature>
<feature type="topological domain" description="Extracellular" evidence="7">
    <location>
        <begin position="97"/>
        <end position="110"/>
    </location>
</feature>
<feature type="transmembrane region" description="Helical; Name=3" evidence="1">
    <location>
        <begin position="111"/>
        <end position="133"/>
    </location>
</feature>
<feature type="topological domain" description="Cytoplasmic" evidence="7">
    <location>
        <begin position="134"/>
        <end position="152"/>
    </location>
</feature>
<feature type="transmembrane region" description="Helical; Name=4" evidence="1">
    <location>
        <begin position="153"/>
        <end position="173"/>
    </location>
</feature>
<feature type="topological domain" description="Extracellular" evidence="7">
    <location>
        <begin position="174"/>
        <end position="202"/>
    </location>
</feature>
<feature type="transmembrane region" description="Helical; Name=5" evidence="1">
    <location>
        <begin position="203"/>
        <end position="224"/>
    </location>
</feature>
<feature type="topological domain" description="Cytoplasmic" evidence="7">
    <location>
        <begin position="225"/>
        <end position="252"/>
    </location>
</feature>
<feature type="transmembrane region" description="Helical; Name=6" evidence="1">
    <location>
        <begin position="253"/>
        <end position="274"/>
    </location>
</feature>
<feature type="topological domain" description="Extracellular" evidence="7">
    <location>
        <begin position="275"/>
        <end position="286"/>
    </location>
</feature>
<feature type="transmembrane region" description="Helical; Name=7" evidence="1">
    <location>
        <begin position="287"/>
        <end position="308"/>
    </location>
</feature>
<feature type="topological domain" description="Cytoplasmic" evidence="7">
    <location>
        <begin position="309"/>
        <end position="348"/>
    </location>
</feature>
<feature type="region of interest" description="Interaction with SAG" evidence="1">
    <location>
        <begin position="330"/>
        <end position="348"/>
    </location>
</feature>
<feature type="short sequence motif" description="'Ionic lock' involved in activated form stabilization" evidence="1">
    <location>
        <begin position="134"/>
        <end position="136"/>
    </location>
</feature>
<feature type="binding site" evidence="1">
    <location>
        <position position="201"/>
    </location>
    <ligand>
        <name>Zn(2+)</name>
        <dbReference type="ChEBI" id="CHEBI:29105"/>
    </ligand>
</feature>
<feature type="binding site" evidence="1">
    <location>
        <position position="279"/>
    </location>
    <ligand>
        <name>Zn(2+)</name>
        <dbReference type="ChEBI" id="CHEBI:29105"/>
    </ligand>
</feature>
<feature type="site" description="Plays an important role in the conformation switch to the active conformation" evidence="1">
    <location>
        <position position="113"/>
    </location>
</feature>
<feature type="modified residue" description="N-acetylmethionine" evidence="1">
    <location>
        <position position="1"/>
    </location>
</feature>
<feature type="modified residue" description="N6-(retinylidene)lysine" evidence="1">
    <location>
        <position position="296"/>
    </location>
</feature>
<feature type="modified residue" description="Phosphoserine" evidence="2">
    <location>
        <position position="334"/>
    </location>
</feature>
<feature type="modified residue" description="Phosphothreonine" evidence="2">
    <location>
        <position position="335"/>
    </location>
</feature>
<feature type="modified residue" description="Phosphothreonine" evidence="2">
    <location>
        <position position="336"/>
    </location>
</feature>
<feature type="modified residue" description="Phosphoserine" evidence="2">
    <location>
        <position position="338"/>
    </location>
</feature>
<feature type="modified residue" description="Phosphothreonine" evidence="1">
    <location>
        <position position="340"/>
    </location>
</feature>
<feature type="modified residue" description="Phosphothreonine" evidence="1">
    <location>
        <position position="342"/>
    </location>
</feature>
<feature type="modified residue" description="Phosphoserine" evidence="1">
    <location>
        <position position="343"/>
    </location>
</feature>
<feature type="lipid moiety-binding region" description="S-palmitoyl cysteine" evidence="1">
    <location>
        <position position="322"/>
    </location>
</feature>
<feature type="lipid moiety-binding region" description="S-palmitoyl cysteine" evidence="1">
    <location>
        <position position="323"/>
    </location>
</feature>
<feature type="glycosylation site" description="N-linked (GlcNAc...) asparagine" evidence="4">
    <location>
        <position position="2"/>
    </location>
</feature>
<feature type="glycosylation site" description="N-linked (GlcNAc...) asparagine" evidence="4">
    <location>
        <position position="15"/>
    </location>
</feature>
<feature type="disulfide bond" evidence="5">
    <location>
        <begin position="110"/>
        <end position="187"/>
    </location>
</feature>
<gene>
    <name type="primary">RHO</name>
    <name type="synonym">RH1</name>
</gene>
<dbReference type="EMBL" id="AY686752">
    <property type="protein sequence ID" value="AAT95413.1"/>
    <property type="molecule type" value="mRNA"/>
</dbReference>
<dbReference type="RefSeq" id="NP_001267787.1">
    <property type="nucleotide sequence ID" value="NM_001280858.1"/>
</dbReference>
<dbReference type="SMR" id="Q68J47"/>
<dbReference type="FunCoup" id="Q68J47">
    <property type="interactions" value="44"/>
</dbReference>
<dbReference type="STRING" id="9785.ENSLAFP00000001142"/>
<dbReference type="GlyCosmos" id="Q68J47">
    <property type="glycosylation" value="2 sites, No reported glycans"/>
</dbReference>
<dbReference type="GeneID" id="100141369"/>
<dbReference type="KEGG" id="lav:100141369"/>
<dbReference type="CTD" id="6010"/>
<dbReference type="eggNOG" id="KOG3656">
    <property type="taxonomic scope" value="Eukaryota"/>
</dbReference>
<dbReference type="InParanoid" id="Q68J47"/>
<dbReference type="OrthoDB" id="5962323at2759"/>
<dbReference type="Proteomes" id="UP000007646">
    <property type="component" value="Unassembled WGS sequence"/>
</dbReference>
<dbReference type="GO" id="GO:0016020">
    <property type="term" value="C:membrane"/>
    <property type="evidence" value="ECO:0000250"/>
    <property type="project" value="UniProtKB"/>
</dbReference>
<dbReference type="GO" id="GO:0097381">
    <property type="term" value="C:photoreceptor disc membrane"/>
    <property type="evidence" value="ECO:0000250"/>
    <property type="project" value="UniProtKB"/>
</dbReference>
<dbReference type="GO" id="GO:0060342">
    <property type="term" value="C:photoreceptor inner segment membrane"/>
    <property type="evidence" value="ECO:0000250"/>
    <property type="project" value="UniProtKB"/>
</dbReference>
<dbReference type="GO" id="GO:0042622">
    <property type="term" value="C:photoreceptor outer segment membrane"/>
    <property type="evidence" value="ECO:0000250"/>
    <property type="project" value="UniProtKB"/>
</dbReference>
<dbReference type="GO" id="GO:0005886">
    <property type="term" value="C:plasma membrane"/>
    <property type="evidence" value="ECO:0000250"/>
    <property type="project" value="UniProtKB"/>
</dbReference>
<dbReference type="GO" id="GO:0005502">
    <property type="term" value="F:11-cis retinal binding"/>
    <property type="evidence" value="ECO:0000250"/>
    <property type="project" value="UniProtKB"/>
</dbReference>
<dbReference type="GO" id="GO:0008020">
    <property type="term" value="F:G protein-coupled photoreceptor activity"/>
    <property type="evidence" value="ECO:0000250"/>
    <property type="project" value="UniProtKB"/>
</dbReference>
<dbReference type="GO" id="GO:0046872">
    <property type="term" value="F:metal ion binding"/>
    <property type="evidence" value="ECO:0007669"/>
    <property type="project" value="UniProtKB-KW"/>
</dbReference>
<dbReference type="GO" id="GO:0016038">
    <property type="term" value="P:absorption of visible light"/>
    <property type="evidence" value="ECO:0000250"/>
    <property type="project" value="AgBase"/>
</dbReference>
<dbReference type="GO" id="GO:0016056">
    <property type="term" value="P:G protein-coupled opsin signaling pathway"/>
    <property type="evidence" value="ECO:0000250"/>
    <property type="project" value="UniProtKB"/>
</dbReference>
<dbReference type="GO" id="GO:0007186">
    <property type="term" value="P:G protein-coupled receptor signaling pathway"/>
    <property type="evidence" value="ECO:0000250"/>
    <property type="project" value="UniProtKB"/>
</dbReference>
<dbReference type="GO" id="GO:0007601">
    <property type="term" value="P:visual perception"/>
    <property type="evidence" value="ECO:0007669"/>
    <property type="project" value="UniProtKB-KW"/>
</dbReference>
<dbReference type="CDD" id="cd15080">
    <property type="entry name" value="7tmA_MWS_opsin"/>
    <property type="match status" value="1"/>
</dbReference>
<dbReference type="FunFam" id="1.20.1070.10:FF:000018">
    <property type="entry name" value="Rhodopsin"/>
    <property type="match status" value="1"/>
</dbReference>
<dbReference type="Gene3D" id="1.20.1070.10">
    <property type="entry name" value="Rhodopsin 7-helix transmembrane proteins"/>
    <property type="match status" value="1"/>
</dbReference>
<dbReference type="InterPro" id="IPR050125">
    <property type="entry name" value="GPCR_opsins"/>
</dbReference>
<dbReference type="InterPro" id="IPR000276">
    <property type="entry name" value="GPCR_Rhodpsn"/>
</dbReference>
<dbReference type="InterPro" id="IPR017452">
    <property type="entry name" value="GPCR_Rhodpsn_7TM"/>
</dbReference>
<dbReference type="InterPro" id="IPR001760">
    <property type="entry name" value="Opsin"/>
</dbReference>
<dbReference type="InterPro" id="IPR027430">
    <property type="entry name" value="Retinal_BS"/>
</dbReference>
<dbReference type="InterPro" id="IPR000732">
    <property type="entry name" value="Rhodopsin"/>
</dbReference>
<dbReference type="InterPro" id="IPR019477">
    <property type="entry name" value="Rhodopsin_N"/>
</dbReference>
<dbReference type="PANTHER" id="PTHR24240">
    <property type="entry name" value="OPSIN"/>
    <property type="match status" value="1"/>
</dbReference>
<dbReference type="Pfam" id="PF00001">
    <property type="entry name" value="7tm_1"/>
    <property type="match status" value="1"/>
</dbReference>
<dbReference type="Pfam" id="PF10413">
    <property type="entry name" value="Rhodopsin_N"/>
    <property type="match status" value="1"/>
</dbReference>
<dbReference type="PRINTS" id="PR00237">
    <property type="entry name" value="GPCRRHODOPSN"/>
</dbReference>
<dbReference type="PRINTS" id="PR00238">
    <property type="entry name" value="OPSIN"/>
</dbReference>
<dbReference type="PRINTS" id="PR00579">
    <property type="entry name" value="RHODOPSIN"/>
</dbReference>
<dbReference type="SUPFAM" id="SSF81321">
    <property type="entry name" value="Family A G protein-coupled receptor-like"/>
    <property type="match status" value="1"/>
</dbReference>
<dbReference type="PROSITE" id="PS00237">
    <property type="entry name" value="G_PROTEIN_RECEP_F1_1"/>
    <property type="match status" value="1"/>
</dbReference>
<dbReference type="PROSITE" id="PS50262">
    <property type="entry name" value="G_PROTEIN_RECEP_F1_2"/>
    <property type="match status" value="1"/>
</dbReference>
<dbReference type="PROSITE" id="PS00238">
    <property type="entry name" value="OPSIN"/>
    <property type="match status" value="1"/>
</dbReference>
<proteinExistence type="evidence at protein level"/>
<comment type="function">
    <text evidence="1 3 6">Photoreceptor required for image-forming vision at low light intensity. Required for photoreceptor cell viability after birth (By similarity). Light-induced isomerization of 11-cis to all-trans retinal triggers a conformational change that activates signaling via G-proteins (PubMed:15781694). Subsequent receptor phosphorylation mediates displacement of the bound G-protein alpha subunit by the arrestin SAG and terminates signaling (By similarity).</text>
</comment>
<comment type="biophysicochemical properties">
    <absorption>
        <max evidence="6">496 nm</max>
    </absorption>
</comment>
<comment type="subunit">
    <text evidence="1 3">Homodimer (By similarity). May form a complex composed of RHO, GRK1 and RCVRN in a Ca(2+)-dependent manner; RCVRN prevents the interaction between GRK1 and RHO (By similarity). Interacts with GRK1 (By similarity). Interacts (phosphorylated form) with SAG. Interacts with GNAT1. Interacts with GNAT3. SAG and G-proteins compete for a common binding site (By similarity). Interacts with PRCD; the interaction promotes PRCD stability. Forms a complex with ASAP1 and ARF4. Forms a complex with ASAP1, RAB11A, Rabin8/RAB3IP, ARF4 and RAB11FIP3; the complex regulates Golgi-to-cilia rhodopsin/RHO transport in photoreceptors (By similarity).</text>
</comment>
<comment type="subcellular location">
    <subcellularLocation>
        <location evidence="1">Membrane</location>
        <topology evidence="1">Multi-pass membrane protein</topology>
    </subcellularLocation>
    <subcellularLocation>
        <location evidence="1">Cell projection</location>
        <location evidence="1">Cilium</location>
        <location evidence="1">Photoreceptor outer segment</location>
    </subcellularLocation>
    <text evidence="3">Synthesized in the inner segment (IS) of rod photoreceptor cells before vectorial transport to disk membranes in the rod outer segment (OS) photosensory cilia.</text>
</comment>
<comment type="PTM">
    <text evidence="1">Phosphorylated on some or all of the serine and threonine residues present in the C-terminal region.</text>
</comment>
<comment type="PTM">
    <text evidence="1 6">Contains one covalently linked retinal chromophore. Upon light absorption, the covalently bound 11-cis-retinal is converted to all-trans-retinal (PubMed:15781694). After hydrolysis of the Schiff base and release of the covalently bound all-trans-retinal, active rhodopsin is regenerated by binding of a fresh molecule of 11-cis-retinal (By similarity).</text>
</comment>
<comment type="similarity">
    <text evidence="5">Belongs to the G-protein coupled receptor 1 family. Opsin subfamily.</text>
</comment>
<organism>
    <name type="scientific">Loxodonta africana</name>
    <name type="common">African elephant</name>
    <dbReference type="NCBI Taxonomy" id="9785"/>
    <lineage>
        <taxon>Eukaryota</taxon>
        <taxon>Metazoa</taxon>
        <taxon>Chordata</taxon>
        <taxon>Craniata</taxon>
        <taxon>Vertebrata</taxon>
        <taxon>Euteleostomi</taxon>
        <taxon>Mammalia</taxon>
        <taxon>Eutheria</taxon>
        <taxon>Afrotheria</taxon>
        <taxon>Proboscidea</taxon>
        <taxon>Elephantidae</taxon>
        <taxon>Loxodonta</taxon>
    </lineage>
</organism>
<sequence length="348" mass="39050">MNGTEGPNFYVPFSNKTGVVRSPFEYPQYYLAEPWQFSMLAAYMFLLIVLGFPINFLTLYVTVQHKNVRTPLNYILLNLAVANHFMVFGGFTTTLYTSLHGYFVFGSTGCNLEGFFATLGGEIALWSLVVLAIERYVVVCKPMSNFRFGENHAIMGVAFTWVMALACAAPPLVGWSRYIPEGMQCSCGIDYYTLKPEVNNESFVIYMFVVHFTIPMTIIFFCYGQLVFTVKEAAAQQQESATTQKAEKEVTRMVIIMVIAFLICWVPYASVAFYIFTHQGSDFGPILMTLPAFFAKSSAIYNPVIYIMMNKQFRNCMLTTICCGKNPFGEEEGSTTASKTETSQVAPA</sequence>
<reference key="1">
    <citation type="journal article" date="2005" name="Genetics">
        <title>Elephants and human color-blind deuteranopes have identical sets of visual pigments.</title>
        <authorList>
            <person name="Yokoyama S."/>
            <person name="Takenaka N."/>
            <person name="Agnew D.W."/>
            <person name="Shoshani J."/>
        </authorList>
    </citation>
    <scope>NUCLEOTIDE SEQUENCE [MRNA]</scope>
    <scope>FUNCTION</scope>
    <scope>BIOPHYSICOCHEMICAL PROPERTIES</scope>
    <scope>RETINAL BINDING</scope>
</reference>
<evidence type="ECO:0000250" key="1">
    <source>
        <dbReference type="UniProtKB" id="P02699"/>
    </source>
</evidence>
<evidence type="ECO:0000250" key="2">
    <source>
        <dbReference type="UniProtKB" id="P02700"/>
    </source>
</evidence>
<evidence type="ECO:0000250" key="3">
    <source>
        <dbReference type="UniProtKB" id="P08100"/>
    </source>
</evidence>
<evidence type="ECO:0000255" key="4"/>
<evidence type="ECO:0000255" key="5">
    <source>
        <dbReference type="PROSITE-ProRule" id="PRU00521"/>
    </source>
</evidence>
<evidence type="ECO:0000269" key="6">
    <source>
    </source>
</evidence>
<evidence type="ECO:0000305" key="7"/>
<name>OPSD_LOXAF</name>
<keyword id="KW-0007">Acetylation</keyword>
<keyword id="KW-0966">Cell projection</keyword>
<keyword id="KW-0157">Chromophore</keyword>
<keyword id="KW-1015">Disulfide bond</keyword>
<keyword id="KW-0297">G-protein coupled receptor</keyword>
<keyword id="KW-0325">Glycoprotein</keyword>
<keyword id="KW-0449">Lipoprotein</keyword>
<keyword id="KW-0472">Membrane</keyword>
<keyword id="KW-0479">Metal-binding</keyword>
<keyword id="KW-0564">Palmitate</keyword>
<keyword id="KW-0597">Phosphoprotein</keyword>
<keyword id="KW-0600">Photoreceptor protein</keyword>
<keyword id="KW-0675">Receptor</keyword>
<keyword id="KW-1185">Reference proteome</keyword>
<keyword id="KW-0681">Retinal protein</keyword>
<keyword id="KW-0716">Sensory transduction</keyword>
<keyword id="KW-0807">Transducer</keyword>
<keyword id="KW-0812">Transmembrane</keyword>
<keyword id="KW-1133">Transmembrane helix</keyword>
<keyword id="KW-0844">Vision</keyword>
<keyword id="KW-0862">Zinc</keyword>
<protein>
    <recommendedName>
        <fullName>Rhodopsin</fullName>
    </recommendedName>
</protein>